<evidence type="ECO:0000255" key="1">
    <source>
        <dbReference type="HAMAP-Rule" id="MF_00019"/>
    </source>
</evidence>
<sequence>MAGNRARIAVDAMGGDHAPNEIVAGAIRASEELDVDILLVGDRPSIEASLQHHHPSPNIEIVDAEGAIEMHEGISELRRKPKASINVSMDLVKKNRADAVVSAGHSGAAMGAATLRLGRLKGIDRPAIGTVFPTLLAGKSVIILDVGANVDCRPKYLEQFALMGTIYSQYVMGVEQPKVGLLNIGEESSKGNDLALATYQLLENNKTIPFIGNAEGRDVLSGRFDVIVCDGFVGNVLLKFAEAVGEIVLQIMREELPQGWRGILGTAILKPNLKKLKQRIDHAEHGGALLLGVAGVCIISHGSSYGPSIFNAIRLAKEAIDHQVLDRIKASQENPTPDSVQASVEK</sequence>
<organism>
    <name type="scientific">Crocosphaera subtropica (strain ATCC 51142 / BH68)</name>
    <name type="common">Cyanothece sp. (strain ATCC 51142)</name>
    <dbReference type="NCBI Taxonomy" id="43989"/>
    <lineage>
        <taxon>Bacteria</taxon>
        <taxon>Bacillati</taxon>
        <taxon>Cyanobacteriota</taxon>
        <taxon>Cyanophyceae</taxon>
        <taxon>Oscillatoriophycideae</taxon>
        <taxon>Chroococcales</taxon>
        <taxon>Aphanothecaceae</taxon>
        <taxon>Crocosphaera</taxon>
        <taxon>Crocosphaera subtropica</taxon>
    </lineage>
</organism>
<feature type="chain" id="PRO_1000089898" description="Phosphate acyltransferase">
    <location>
        <begin position="1"/>
        <end position="346"/>
    </location>
</feature>
<name>PLSX_CROS5</name>
<reference key="1">
    <citation type="journal article" date="2008" name="Proc. Natl. Acad. Sci. U.S.A.">
        <title>The genome of Cyanothece 51142, a unicellular diazotrophic cyanobacterium important in the marine nitrogen cycle.</title>
        <authorList>
            <person name="Welsh E.A."/>
            <person name="Liberton M."/>
            <person name="Stoeckel J."/>
            <person name="Loh T."/>
            <person name="Elvitigala T."/>
            <person name="Wang C."/>
            <person name="Wollam A."/>
            <person name="Fulton R.S."/>
            <person name="Clifton S.W."/>
            <person name="Jacobs J.M."/>
            <person name="Aurora R."/>
            <person name="Ghosh B.K."/>
            <person name="Sherman L.A."/>
            <person name="Smith R.D."/>
            <person name="Wilson R.K."/>
            <person name="Pakrasi H.B."/>
        </authorList>
    </citation>
    <scope>NUCLEOTIDE SEQUENCE [LARGE SCALE GENOMIC DNA]</scope>
    <source>
        <strain>ATCC 51142 / BH68</strain>
    </source>
</reference>
<dbReference type="EC" id="2.3.1.274" evidence="1"/>
<dbReference type="EMBL" id="CP000806">
    <property type="protein sequence ID" value="ACB50935.1"/>
    <property type="molecule type" value="Genomic_DNA"/>
</dbReference>
<dbReference type="RefSeq" id="WP_009544390.1">
    <property type="nucleotide sequence ID" value="NC_010546.1"/>
</dbReference>
<dbReference type="SMR" id="B1WXU8"/>
<dbReference type="STRING" id="43989.cce_1585"/>
<dbReference type="KEGG" id="cyt:cce_1585"/>
<dbReference type="eggNOG" id="COG0416">
    <property type="taxonomic scope" value="Bacteria"/>
</dbReference>
<dbReference type="HOGENOM" id="CLU_039379_1_1_3"/>
<dbReference type="OrthoDB" id="9806408at2"/>
<dbReference type="UniPathway" id="UPA00085"/>
<dbReference type="Proteomes" id="UP000001203">
    <property type="component" value="Chromosome circular"/>
</dbReference>
<dbReference type="GO" id="GO:0005737">
    <property type="term" value="C:cytoplasm"/>
    <property type="evidence" value="ECO:0007669"/>
    <property type="project" value="UniProtKB-SubCell"/>
</dbReference>
<dbReference type="GO" id="GO:0043811">
    <property type="term" value="F:phosphate:acyl-[acyl carrier protein] acyltransferase activity"/>
    <property type="evidence" value="ECO:0007669"/>
    <property type="project" value="UniProtKB-UniRule"/>
</dbReference>
<dbReference type="GO" id="GO:0006633">
    <property type="term" value="P:fatty acid biosynthetic process"/>
    <property type="evidence" value="ECO:0007669"/>
    <property type="project" value="UniProtKB-UniRule"/>
</dbReference>
<dbReference type="GO" id="GO:0008654">
    <property type="term" value="P:phospholipid biosynthetic process"/>
    <property type="evidence" value="ECO:0007669"/>
    <property type="project" value="UniProtKB-KW"/>
</dbReference>
<dbReference type="Gene3D" id="3.40.718.10">
    <property type="entry name" value="Isopropylmalate Dehydrogenase"/>
    <property type="match status" value="1"/>
</dbReference>
<dbReference type="HAMAP" id="MF_00019">
    <property type="entry name" value="PlsX"/>
    <property type="match status" value="1"/>
</dbReference>
<dbReference type="InterPro" id="IPR003664">
    <property type="entry name" value="FA_synthesis"/>
</dbReference>
<dbReference type="InterPro" id="IPR012281">
    <property type="entry name" value="Phospholipid_synth_PlsX-like"/>
</dbReference>
<dbReference type="NCBIfam" id="TIGR00182">
    <property type="entry name" value="plsX"/>
    <property type="match status" value="1"/>
</dbReference>
<dbReference type="PANTHER" id="PTHR30100">
    <property type="entry name" value="FATTY ACID/PHOSPHOLIPID SYNTHESIS PROTEIN PLSX"/>
    <property type="match status" value="1"/>
</dbReference>
<dbReference type="PANTHER" id="PTHR30100:SF1">
    <property type="entry name" value="PHOSPHATE ACYLTRANSFERASE"/>
    <property type="match status" value="1"/>
</dbReference>
<dbReference type="Pfam" id="PF02504">
    <property type="entry name" value="FA_synthesis"/>
    <property type="match status" value="1"/>
</dbReference>
<dbReference type="PIRSF" id="PIRSF002465">
    <property type="entry name" value="Phsphlp_syn_PlsX"/>
    <property type="match status" value="1"/>
</dbReference>
<dbReference type="SUPFAM" id="SSF53659">
    <property type="entry name" value="Isocitrate/Isopropylmalate dehydrogenase-like"/>
    <property type="match status" value="1"/>
</dbReference>
<protein>
    <recommendedName>
        <fullName evidence="1">Phosphate acyltransferase</fullName>
        <ecNumber evidence="1">2.3.1.274</ecNumber>
    </recommendedName>
    <alternativeName>
        <fullName evidence="1">Acyl-ACP phosphotransacylase</fullName>
    </alternativeName>
    <alternativeName>
        <fullName evidence="1">Acyl-[acyl-carrier-protein]--phosphate acyltransferase</fullName>
    </alternativeName>
    <alternativeName>
        <fullName evidence="1">Phosphate-acyl-ACP acyltransferase</fullName>
    </alternativeName>
</protein>
<proteinExistence type="inferred from homology"/>
<comment type="function">
    <text evidence="1">Catalyzes the reversible formation of acyl-phosphate (acyl-PO(4)) from acyl-[acyl-carrier-protein] (acyl-ACP). This enzyme utilizes acyl-ACP as fatty acyl donor, but not acyl-CoA.</text>
</comment>
<comment type="catalytic activity">
    <reaction evidence="1">
        <text>a fatty acyl-[ACP] + phosphate = an acyl phosphate + holo-[ACP]</text>
        <dbReference type="Rhea" id="RHEA:42292"/>
        <dbReference type="Rhea" id="RHEA-COMP:9685"/>
        <dbReference type="Rhea" id="RHEA-COMP:14125"/>
        <dbReference type="ChEBI" id="CHEBI:43474"/>
        <dbReference type="ChEBI" id="CHEBI:59918"/>
        <dbReference type="ChEBI" id="CHEBI:64479"/>
        <dbReference type="ChEBI" id="CHEBI:138651"/>
        <dbReference type="EC" id="2.3.1.274"/>
    </reaction>
</comment>
<comment type="pathway">
    <text evidence="1">Lipid metabolism; phospholipid metabolism.</text>
</comment>
<comment type="subunit">
    <text evidence="1">Homodimer. Probably interacts with PlsY.</text>
</comment>
<comment type="subcellular location">
    <subcellularLocation>
        <location evidence="1">Cytoplasm</location>
    </subcellularLocation>
    <text evidence="1">Associated with the membrane possibly through PlsY.</text>
</comment>
<comment type="similarity">
    <text evidence="1">Belongs to the PlsX family.</text>
</comment>
<accession>B1WXU8</accession>
<keyword id="KW-0963">Cytoplasm</keyword>
<keyword id="KW-0444">Lipid biosynthesis</keyword>
<keyword id="KW-0443">Lipid metabolism</keyword>
<keyword id="KW-0594">Phospholipid biosynthesis</keyword>
<keyword id="KW-1208">Phospholipid metabolism</keyword>
<keyword id="KW-1185">Reference proteome</keyword>
<keyword id="KW-0808">Transferase</keyword>
<gene>
    <name evidence="1" type="primary">plsX</name>
    <name type="ordered locus">cce_1585</name>
</gene>